<evidence type="ECO:0000255" key="1">
    <source>
        <dbReference type="HAMAP-Rule" id="MF_01821"/>
    </source>
</evidence>
<feature type="chain" id="PRO_1000188179" description="RNA polymerase-associated protein RapA">
    <location>
        <begin position="1"/>
        <end position="968"/>
    </location>
</feature>
<feature type="domain" description="Helicase ATP-binding" evidence="1">
    <location>
        <begin position="164"/>
        <end position="334"/>
    </location>
</feature>
<feature type="domain" description="Helicase C-terminal" evidence="1">
    <location>
        <begin position="490"/>
        <end position="644"/>
    </location>
</feature>
<feature type="short sequence motif" description="DEAH box">
    <location>
        <begin position="280"/>
        <end position="283"/>
    </location>
</feature>
<feature type="binding site" evidence="1">
    <location>
        <begin position="177"/>
        <end position="184"/>
    </location>
    <ligand>
        <name>ATP</name>
        <dbReference type="ChEBI" id="CHEBI:30616"/>
    </ligand>
</feature>
<sequence length="968" mass="109434">MPFTLGQRWISDTESELGLGTVVALDARMVTLLFPAIGENRLYSRNDSPITRVMFNPGDTITSHEGWQLHVDKVNEENGLLSYTGTRLDTQEANVTLREVLLDSKLVFSKPQDRLFAGQIDRMDRFALRYRARKFQSEQYRMPWSGLRGQRTSLIPHQLNIAHDVGRRHAPRVLLADEVGLGKTIEAGMILHQQLLSGAAERVLIVVPETLQHQWLVEMLRRFNLRFSLFDDERYAEAQHDAYNPFETEQLVICSLDFVRRSKQRLEHLCDAEWDLMVVDEAHHLVWSEEAPSREYQAIEQLAERVPGILLLTATPEQLGMESHFARLRLLDPNRFHDFAQFVEEQQNYRPVADAVALLLAGNTLSDSELNTLGDLIGEQDIEPLLQAANSDREDAQAARQELVSMLMDRHGTSRVLFRNTRNGVKGFPKRELHTIRLPLPTQYQTAIKVSGIMGARKTAEERARDMLYPEQIYQEFEGDTGTWWNFDPRVEWLMGYLTSHRSQKVLVICAKAATALQLEQVLREREGIRAAVFHEGMSIIERDRAAAWFAEEDTGAQVLLCSEIGSEGRNFQFASNLVMFDLPFNPDLLEQRIGRLDRIGQAHDIQIHVPYLEKTAQSVLVRWYHEGLDAFEHTCPTGRTVYDSVHDELINYLAAPESTDGFDDLIKSCRQQHDALKAQLEQGRDRLLEIHSNGGEKAQALAESIEEQDDDTSLIAFSMNLFDIVGINQDDRGENLIVLTPSDHMLVPDFPGLPEDGCTITFERDVALSREDAQFITWEHPLIRNGLDLILSGDTGSSTISLLKNKALPVGTLLLELIYVVEAQAPKQLQLNRFLPATPVRLLLDKNGNNLAGQVEFESFNRQLSAVNRHTGSKLVNAVQQDVHAILQQGEAQIAKAALGLIDAARNEADEKLTAELSRLEALKAVNPNIRDDELAAIESNRQQVMDALAQAGWRLDALRLIVVTHQ</sequence>
<name>RAPA_KLEP3</name>
<protein>
    <recommendedName>
        <fullName evidence="1">RNA polymerase-associated protein RapA</fullName>
        <ecNumber evidence="1">3.6.4.-</ecNumber>
    </recommendedName>
    <alternativeName>
        <fullName evidence="1">ATP-dependent helicase HepA</fullName>
    </alternativeName>
</protein>
<organism>
    <name type="scientific">Klebsiella pneumoniae (strain 342)</name>
    <dbReference type="NCBI Taxonomy" id="507522"/>
    <lineage>
        <taxon>Bacteria</taxon>
        <taxon>Pseudomonadati</taxon>
        <taxon>Pseudomonadota</taxon>
        <taxon>Gammaproteobacteria</taxon>
        <taxon>Enterobacterales</taxon>
        <taxon>Enterobacteriaceae</taxon>
        <taxon>Klebsiella/Raoultella group</taxon>
        <taxon>Klebsiella</taxon>
        <taxon>Klebsiella pneumoniae complex</taxon>
    </lineage>
</organism>
<keyword id="KW-0010">Activator</keyword>
<keyword id="KW-0067">ATP-binding</keyword>
<keyword id="KW-0238">DNA-binding</keyword>
<keyword id="KW-0347">Helicase</keyword>
<keyword id="KW-0378">Hydrolase</keyword>
<keyword id="KW-0547">Nucleotide-binding</keyword>
<keyword id="KW-0804">Transcription</keyword>
<keyword id="KW-0805">Transcription regulation</keyword>
<reference key="1">
    <citation type="journal article" date="2008" name="PLoS Genet.">
        <title>Complete genome sequence of the N2-fixing broad host range endophyte Klebsiella pneumoniae 342 and virulence predictions verified in mice.</title>
        <authorList>
            <person name="Fouts D.E."/>
            <person name="Tyler H.L."/>
            <person name="DeBoy R.T."/>
            <person name="Daugherty S."/>
            <person name="Ren Q."/>
            <person name="Badger J.H."/>
            <person name="Durkin A.S."/>
            <person name="Huot H."/>
            <person name="Shrivastava S."/>
            <person name="Kothari S."/>
            <person name="Dodson R.J."/>
            <person name="Mohamoud Y."/>
            <person name="Khouri H."/>
            <person name="Roesch L.F.W."/>
            <person name="Krogfelt K.A."/>
            <person name="Struve C."/>
            <person name="Triplett E.W."/>
            <person name="Methe B.A."/>
        </authorList>
    </citation>
    <scope>NUCLEOTIDE SEQUENCE [LARGE SCALE GENOMIC DNA]</scope>
    <source>
        <strain>342</strain>
    </source>
</reference>
<gene>
    <name evidence="1" type="primary">rapA</name>
    <name type="ordered locus">KPK_4684</name>
</gene>
<comment type="function">
    <text evidence="1">Transcription regulator that activates transcription by stimulating RNA polymerase (RNAP) recycling in case of stress conditions such as supercoiled DNA or high salt concentrations. Probably acts by releasing the RNAP, when it is trapped or immobilized on tightly supercoiled DNA. Does not activate transcription on linear DNA. Probably not involved in DNA repair.</text>
</comment>
<comment type="subunit">
    <text evidence="1">Interacts with the RNAP. Has a higher affinity for the core RNAP than for the holoenzyme. Its ATPase activity is stimulated by binding to RNAP.</text>
</comment>
<comment type="similarity">
    <text evidence="1">Belongs to the SNF2/RAD54 helicase family. RapA subfamily.</text>
</comment>
<accession>B5Y1Y4</accession>
<dbReference type="EC" id="3.6.4.-" evidence="1"/>
<dbReference type="EMBL" id="CP000964">
    <property type="protein sequence ID" value="ACI10531.1"/>
    <property type="molecule type" value="Genomic_DNA"/>
</dbReference>
<dbReference type="SMR" id="B5Y1Y4"/>
<dbReference type="KEGG" id="kpe:KPK_4684"/>
<dbReference type="HOGENOM" id="CLU_011520_0_0_6"/>
<dbReference type="Proteomes" id="UP000001734">
    <property type="component" value="Chromosome"/>
</dbReference>
<dbReference type="GO" id="GO:0005524">
    <property type="term" value="F:ATP binding"/>
    <property type="evidence" value="ECO:0007669"/>
    <property type="project" value="UniProtKB-UniRule"/>
</dbReference>
<dbReference type="GO" id="GO:0003677">
    <property type="term" value="F:DNA binding"/>
    <property type="evidence" value="ECO:0007669"/>
    <property type="project" value="UniProtKB-KW"/>
</dbReference>
<dbReference type="GO" id="GO:0004386">
    <property type="term" value="F:helicase activity"/>
    <property type="evidence" value="ECO:0007669"/>
    <property type="project" value="UniProtKB-UniRule"/>
</dbReference>
<dbReference type="GO" id="GO:0016817">
    <property type="term" value="F:hydrolase activity, acting on acid anhydrides"/>
    <property type="evidence" value="ECO:0007669"/>
    <property type="project" value="InterPro"/>
</dbReference>
<dbReference type="GO" id="GO:0006355">
    <property type="term" value="P:regulation of DNA-templated transcription"/>
    <property type="evidence" value="ECO:0007669"/>
    <property type="project" value="UniProtKB-UniRule"/>
</dbReference>
<dbReference type="CDD" id="cd18011">
    <property type="entry name" value="DEXDc_RapA"/>
    <property type="match status" value="1"/>
</dbReference>
<dbReference type="CDD" id="cd18793">
    <property type="entry name" value="SF2_C_SNF"/>
    <property type="match status" value="1"/>
</dbReference>
<dbReference type="FunFam" id="3.30.360.80:FF:000001">
    <property type="entry name" value="RNA polymerase-associated protein RapA"/>
    <property type="match status" value="1"/>
</dbReference>
<dbReference type="FunFam" id="3.40.50.10810:FF:000012">
    <property type="entry name" value="RNA polymerase-associated protein RapA"/>
    <property type="match status" value="1"/>
</dbReference>
<dbReference type="FunFam" id="3.40.50.300:FF:000350">
    <property type="entry name" value="RNA polymerase-associated protein RapA"/>
    <property type="match status" value="1"/>
</dbReference>
<dbReference type="Gene3D" id="2.30.30.140">
    <property type="match status" value="1"/>
</dbReference>
<dbReference type="Gene3D" id="2.30.30.930">
    <property type="match status" value="1"/>
</dbReference>
<dbReference type="Gene3D" id="3.30.360.80">
    <property type="match status" value="1"/>
</dbReference>
<dbReference type="Gene3D" id="6.10.140.1500">
    <property type="match status" value="1"/>
</dbReference>
<dbReference type="Gene3D" id="6.10.140.2230">
    <property type="match status" value="1"/>
</dbReference>
<dbReference type="Gene3D" id="3.40.50.300">
    <property type="entry name" value="P-loop containing nucleotide triphosphate hydrolases"/>
    <property type="match status" value="1"/>
</dbReference>
<dbReference type="Gene3D" id="3.40.50.10810">
    <property type="entry name" value="Tandem AAA-ATPase domain"/>
    <property type="match status" value="1"/>
</dbReference>
<dbReference type="HAMAP" id="MF_01821">
    <property type="entry name" value="Helicase_RapA"/>
    <property type="match status" value="1"/>
</dbReference>
<dbReference type="InterPro" id="IPR014001">
    <property type="entry name" value="Helicase_ATP-bd"/>
</dbReference>
<dbReference type="InterPro" id="IPR001650">
    <property type="entry name" value="Helicase_C-like"/>
</dbReference>
<dbReference type="InterPro" id="IPR023949">
    <property type="entry name" value="Helicase_RapA"/>
</dbReference>
<dbReference type="InterPro" id="IPR027417">
    <property type="entry name" value="P-loop_NTPase"/>
</dbReference>
<dbReference type="InterPro" id="IPR022737">
    <property type="entry name" value="RapA_C"/>
</dbReference>
<dbReference type="InterPro" id="IPR038718">
    <property type="entry name" value="SNF2-like_sf"/>
</dbReference>
<dbReference type="InterPro" id="IPR049730">
    <property type="entry name" value="SNF2/RAD54-like_C"/>
</dbReference>
<dbReference type="InterPro" id="IPR000330">
    <property type="entry name" value="SNF2_N"/>
</dbReference>
<dbReference type="InterPro" id="IPR040765">
    <property type="entry name" value="Tudor_1_RapA"/>
</dbReference>
<dbReference type="InterPro" id="IPR040766">
    <property type="entry name" value="Tudor_2_RapA"/>
</dbReference>
<dbReference type="NCBIfam" id="NF003426">
    <property type="entry name" value="PRK04914.1"/>
    <property type="match status" value="1"/>
</dbReference>
<dbReference type="PANTHER" id="PTHR45766">
    <property type="entry name" value="DNA ANNEALING HELICASE AND ENDONUCLEASE ZRANB3 FAMILY MEMBER"/>
    <property type="match status" value="1"/>
</dbReference>
<dbReference type="PANTHER" id="PTHR45766:SF6">
    <property type="entry name" value="SWI_SNF-RELATED MATRIX-ASSOCIATED ACTIN-DEPENDENT REGULATOR OF CHROMATIN SUBFAMILY A-LIKE PROTEIN 1"/>
    <property type="match status" value="1"/>
</dbReference>
<dbReference type="Pfam" id="PF00271">
    <property type="entry name" value="Helicase_C"/>
    <property type="match status" value="1"/>
</dbReference>
<dbReference type="Pfam" id="PF12137">
    <property type="entry name" value="RapA_C"/>
    <property type="match status" value="1"/>
</dbReference>
<dbReference type="Pfam" id="PF00176">
    <property type="entry name" value="SNF2-rel_dom"/>
    <property type="match status" value="1"/>
</dbReference>
<dbReference type="Pfam" id="PF18339">
    <property type="entry name" value="Tudor_1_RapA"/>
    <property type="match status" value="1"/>
</dbReference>
<dbReference type="Pfam" id="PF18337">
    <property type="entry name" value="Tudor_RapA"/>
    <property type="match status" value="1"/>
</dbReference>
<dbReference type="SMART" id="SM00487">
    <property type="entry name" value="DEXDc"/>
    <property type="match status" value="1"/>
</dbReference>
<dbReference type="SMART" id="SM00490">
    <property type="entry name" value="HELICc"/>
    <property type="match status" value="1"/>
</dbReference>
<dbReference type="SUPFAM" id="SSF52540">
    <property type="entry name" value="P-loop containing nucleoside triphosphate hydrolases"/>
    <property type="match status" value="2"/>
</dbReference>
<dbReference type="PROSITE" id="PS51192">
    <property type="entry name" value="HELICASE_ATP_BIND_1"/>
    <property type="match status" value="1"/>
</dbReference>
<dbReference type="PROSITE" id="PS51194">
    <property type="entry name" value="HELICASE_CTER"/>
    <property type="match status" value="1"/>
</dbReference>
<proteinExistence type="inferred from homology"/>